<protein>
    <recommendedName>
        <fullName evidence="2">O-acetylserine sulfhydrylase</fullName>
        <shortName evidence="2">OAS sulfhydrylase</shortName>
        <shortName evidence="2">OASS</shortName>
        <ecNumber evidence="1">2.5.1.47</ecNumber>
    </recommendedName>
    <alternativeName>
        <fullName>Cysteine synthase A</fullName>
        <shortName>CSase A</shortName>
    </alternativeName>
    <alternativeName>
        <fullName>O-acetylserine (thiol)-lyase A</fullName>
        <shortName>OAS-TL A</shortName>
    </alternativeName>
    <alternativeName>
        <fullName>O-acetylserine-specific cysteine synthase</fullName>
    </alternativeName>
    <alternativeName>
        <fullName>Sulfide-dependent cysteine synthase</fullName>
    </alternativeName>
</protein>
<organism>
    <name type="scientific">Mycobacterium tuberculosis (strain ATCC 25618 / H37Rv)</name>
    <dbReference type="NCBI Taxonomy" id="83332"/>
    <lineage>
        <taxon>Bacteria</taxon>
        <taxon>Bacillati</taxon>
        <taxon>Actinomycetota</taxon>
        <taxon>Actinomycetes</taxon>
        <taxon>Mycobacteriales</taxon>
        <taxon>Mycobacteriaceae</taxon>
        <taxon>Mycobacterium</taxon>
        <taxon>Mycobacterium tuberculosis complex</taxon>
    </lineage>
</organism>
<proteinExistence type="evidence at protein level"/>
<gene>
    <name type="primary">cysK1</name>
    <name type="synonym">cysK</name>
    <name type="ordered locus">Rv2334</name>
    <name type="ORF">MTCY98.03</name>
</gene>
<comment type="function">
    <text evidence="1">Catalyzes the conversion of O-acetylserine (OAS) to cysteine through the elimination of acetate and addition of hydrogen sulfide.</text>
</comment>
<comment type="catalytic activity">
    <reaction evidence="1">
        <text>O-acetyl-L-serine + hydrogen sulfide = L-cysteine + acetate</text>
        <dbReference type="Rhea" id="RHEA:14829"/>
        <dbReference type="ChEBI" id="CHEBI:29919"/>
        <dbReference type="ChEBI" id="CHEBI:30089"/>
        <dbReference type="ChEBI" id="CHEBI:35235"/>
        <dbReference type="ChEBI" id="CHEBI:58340"/>
        <dbReference type="EC" id="2.5.1.47"/>
    </reaction>
</comment>
<comment type="cofactor">
    <cofactor evidence="1">
        <name>pyridoxal 5'-phosphate</name>
        <dbReference type="ChEBI" id="CHEBI:597326"/>
    </cofactor>
</comment>
<comment type="activity regulation">
    <text evidence="1">Competitively inhibited by a four-residue peptide derived from the C-terminus of serine acetyltransferase (CysE). This suggests that CysK1 may associate with CysE in vivo to form a bi-enzyme complex, in which the OASS activity is down-regulated.</text>
</comment>
<comment type="pathway">
    <text>Amino-acid biosynthesis; L-cysteine biosynthesis; L-cysteine from L-serine: step 2/2.</text>
</comment>
<comment type="subunit">
    <text evidence="1">Homodimer.</text>
</comment>
<comment type="similarity">
    <text evidence="3">Belongs to the cysteine synthase/cystathionine beta-synthase family.</text>
</comment>
<sequence>MSIAEDITQLIGRTPLVRLRRVTDGAVADIVAKLEFFNPANSVKDRIGVAMLQAAEQAGLIKPDTIILEPTSGNTGIALAMVCAARGYRCVLTMPETMSLERRMLLRAYGAELILTPGADGMSGAIAKAEELAKTDQRYFVPQQFENPANPAIHRVTTAEEVWRDTDGKVDIVVAGVGTGGTITGVAQVIKERKPSARFVAVEPAASPVLSGGQKGPHPIQGIGAGFVPPVLDQDLVDEIITVGNEDALNVARRLAREEGLLVGISSGAATVAALQVARRPENAGKLIVVVLPDFGERYLSTPLFADVAD</sequence>
<accession>P9WP55</accession>
<accession>L0TC08</accession>
<accession>P0A534</accession>
<accession>P95230</accession>
<dbReference type="EC" id="2.5.1.47" evidence="1"/>
<dbReference type="EMBL" id="AL123456">
    <property type="protein sequence ID" value="CCP45122.1"/>
    <property type="molecule type" value="Genomic_DNA"/>
</dbReference>
<dbReference type="PIR" id="G70660">
    <property type="entry name" value="G70660"/>
</dbReference>
<dbReference type="RefSeq" id="WP_003899275.1">
    <property type="nucleotide sequence ID" value="NZ_NVQJ01000012.1"/>
</dbReference>
<dbReference type="RefSeq" id="YP_177868.1">
    <property type="nucleotide sequence ID" value="NC_000962.3"/>
</dbReference>
<dbReference type="PDB" id="2Q3B">
    <property type="method" value="X-ray"/>
    <property type="resolution" value="1.80 A"/>
    <property type="chains" value="A=1-310"/>
</dbReference>
<dbReference type="PDB" id="2Q3C">
    <property type="method" value="X-ray"/>
    <property type="resolution" value="2.10 A"/>
    <property type="chains" value="A=1-310"/>
</dbReference>
<dbReference type="PDB" id="2Q3D">
    <property type="method" value="X-ray"/>
    <property type="resolution" value="2.20 A"/>
    <property type="chains" value="A=1-310"/>
</dbReference>
<dbReference type="PDB" id="3ZEI">
    <property type="method" value="X-ray"/>
    <property type="resolution" value="2.00 A"/>
    <property type="chains" value="A=1-310"/>
</dbReference>
<dbReference type="PDBsum" id="2Q3B"/>
<dbReference type="PDBsum" id="2Q3C"/>
<dbReference type="PDBsum" id="2Q3D"/>
<dbReference type="PDBsum" id="3ZEI"/>
<dbReference type="SMR" id="P9WP55"/>
<dbReference type="FunCoup" id="P9WP55">
    <property type="interactions" value="302"/>
</dbReference>
<dbReference type="STRING" id="83332.Rv2334"/>
<dbReference type="BindingDB" id="P9WP55"/>
<dbReference type="ChEMBL" id="CHEMBL2321612"/>
<dbReference type="PaxDb" id="83332-Rv2334"/>
<dbReference type="DNASU" id="886016"/>
<dbReference type="GeneID" id="45426318"/>
<dbReference type="GeneID" id="886016"/>
<dbReference type="KEGG" id="mtu:Rv2334"/>
<dbReference type="KEGG" id="mtv:RVBD_2334"/>
<dbReference type="TubercuList" id="Rv2334"/>
<dbReference type="eggNOG" id="COG0031">
    <property type="taxonomic scope" value="Bacteria"/>
</dbReference>
<dbReference type="InParanoid" id="P9WP55"/>
<dbReference type="OrthoDB" id="9805733at2"/>
<dbReference type="PhylomeDB" id="P9WP55"/>
<dbReference type="BRENDA" id="2.5.1.47">
    <property type="organism ID" value="3445"/>
</dbReference>
<dbReference type="Reactome" id="R-MTU-936721">
    <property type="pathway name" value="Cysteine synthesis from O-acetylserine"/>
</dbReference>
<dbReference type="UniPathway" id="UPA00136">
    <property type="reaction ID" value="UER00200"/>
</dbReference>
<dbReference type="EvolutionaryTrace" id="P9WP55"/>
<dbReference type="PRO" id="PR:P9WP55"/>
<dbReference type="Proteomes" id="UP000001584">
    <property type="component" value="Chromosome"/>
</dbReference>
<dbReference type="GO" id="GO:0005737">
    <property type="term" value="C:cytoplasm"/>
    <property type="evidence" value="ECO:0000318"/>
    <property type="project" value="GO_Central"/>
</dbReference>
<dbReference type="GO" id="GO:0005829">
    <property type="term" value="C:cytosol"/>
    <property type="evidence" value="ECO:0000304"/>
    <property type="project" value="Reactome"/>
</dbReference>
<dbReference type="GO" id="GO:0005576">
    <property type="term" value="C:extracellular region"/>
    <property type="evidence" value="ECO:0007005"/>
    <property type="project" value="MTBBASE"/>
</dbReference>
<dbReference type="GO" id="GO:0004124">
    <property type="term" value="F:cysteine synthase activity"/>
    <property type="evidence" value="ECO:0000314"/>
    <property type="project" value="MTBBASE"/>
</dbReference>
<dbReference type="GO" id="GO:0080146">
    <property type="term" value="F:L-cysteine desulfhydrase activity"/>
    <property type="evidence" value="ECO:0000318"/>
    <property type="project" value="GO_Central"/>
</dbReference>
<dbReference type="GO" id="GO:0030170">
    <property type="term" value="F:pyridoxal phosphate binding"/>
    <property type="evidence" value="ECO:0000314"/>
    <property type="project" value="MTBBASE"/>
</dbReference>
<dbReference type="GO" id="GO:0006535">
    <property type="term" value="P:cysteine biosynthetic process from serine"/>
    <property type="evidence" value="ECO:0000314"/>
    <property type="project" value="MTBBASE"/>
</dbReference>
<dbReference type="CDD" id="cd01561">
    <property type="entry name" value="CBS_like"/>
    <property type="match status" value="1"/>
</dbReference>
<dbReference type="FunFam" id="3.40.50.1100:FF:000067">
    <property type="entry name" value="Cysteine synthase"/>
    <property type="match status" value="1"/>
</dbReference>
<dbReference type="Gene3D" id="3.40.50.1100">
    <property type="match status" value="2"/>
</dbReference>
<dbReference type="InterPro" id="IPR005856">
    <property type="entry name" value="Cys_synth"/>
</dbReference>
<dbReference type="InterPro" id="IPR050214">
    <property type="entry name" value="Cys_Synth/Cystath_Beta-Synth"/>
</dbReference>
<dbReference type="InterPro" id="IPR005859">
    <property type="entry name" value="CysK"/>
</dbReference>
<dbReference type="InterPro" id="IPR001216">
    <property type="entry name" value="P-phosphate_BS"/>
</dbReference>
<dbReference type="InterPro" id="IPR001926">
    <property type="entry name" value="TrpB-like_PALP"/>
</dbReference>
<dbReference type="InterPro" id="IPR036052">
    <property type="entry name" value="TrpB-like_PALP_sf"/>
</dbReference>
<dbReference type="NCBIfam" id="TIGR01139">
    <property type="entry name" value="cysK"/>
    <property type="match status" value="1"/>
</dbReference>
<dbReference type="NCBIfam" id="TIGR01136">
    <property type="entry name" value="cysKM"/>
    <property type="match status" value="1"/>
</dbReference>
<dbReference type="PANTHER" id="PTHR10314">
    <property type="entry name" value="CYSTATHIONINE BETA-SYNTHASE"/>
    <property type="match status" value="1"/>
</dbReference>
<dbReference type="Pfam" id="PF00291">
    <property type="entry name" value="PALP"/>
    <property type="match status" value="1"/>
</dbReference>
<dbReference type="SUPFAM" id="SSF53686">
    <property type="entry name" value="Tryptophan synthase beta subunit-like PLP-dependent enzymes"/>
    <property type="match status" value="1"/>
</dbReference>
<dbReference type="PROSITE" id="PS00901">
    <property type="entry name" value="CYS_SYNTHASE"/>
    <property type="match status" value="1"/>
</dbReference>
<evidence type="ECO:0000269" key="1">
    <source>
    </source>
</evidence>
<evidence type="ECO:0000303" key="2">
    <source>
    </source>
</evidence>
<evidence type="ECO:0000305" key="3"/>
<evidence type="ECO:0007829" key="4">
    <source>
        <dbReference type="PDB" id="2Q3B"/>
    </source>
</evidence>
<keyword id="KW-0002">3D-structure</keyword>
<keyword id="KW-0028">Amino-acid biosynthesis</keyword>
<keyword id="KW-0198">Cysteine biosynthesis</keyword>
<keyword id="KW-0663">Pyridoxal phosphate</keyword>
<keyword id="KW-1185">Reference proteome</keyword>
<keyword id="KW-0808">Transferase</keyword>
<name>CYSK_MYCTU</name>
<reference key="1">
    <citation type="journal article" date="1998" name="Nature">
        <title>Deciphering the biology of Mycobacterium tuberculosis from the complete genome sequence.</title>
        <authorList>
            <person name="Cole S.T."/>
            <person name="Brosch R."/>
            <person name="Parkhill J."/>
            <person name="Garnier T."/>
            <person name="Churcher C.M."/>
            <person name="Harris D.E."/>
            <person name="Gordon S.V."/>
            <person name="Eiglmeier K."/>
            <person name="Gas S."/>
            <person name="Barry C.E. III"/>
            <person name="Tekaia F."/>
            <person name="Badcock K."/>
            <person name="Basham D."/>
            <person name="Brown D."/>
            <person name="Chillingworth T."/>
            <person name="Connor R."/>
            <person name="Davies R.M."/>
            <person name="Devlin K."/>
            <person name="Feltwell T."/>
            <person name="Gentles S."/>
            <person name="Hamlin N."/>
            <person name="Holroyd S."/>
            <person name="Hornsby T."/>
            <person name="Jagels K."/>
            <person name="Krogh A."/>
            <person name="McLean J."/>
            <person name="Moule S."/>
            <person name="Murphy L.D."/>
            <person name="Oliver S."/>
            <person name="Osborne J."/>
            <person name="Quail M.A."/>
            <person name="Rajandream M.A."/>
            <person name="Rogers J."/>
            <person name="Rutter S."/>
            <person name="Seeger K."/>
            <person name="Skelton S."/>
            <person name="Squares S."/>
            <person name="Squares R."/>
            <person name="Sulston J.E."/>
            <person name="Taylor K."/>
            <person name="Whitehead S."/>
            <person name="Barrell B.G."/>
        </authorList>
    </citation>
    <scope>NUCLEOTIDE SEQUENCE [LARGE SCALE GENOMIC DNA]</scope>
    <source>
        <strain>ATCC 25618 / H37Rv</strain>
    </source>
</reference>
<reference key="2">
    <citation type="journal article" date="2011" name="Mol. Cell. Proteomics">
        <title>Proteogenomic analysis of Mycobacterium tuberculosis by high resolution mass spectrometry.</title>
        <authorList>
            <person name="Kelkar D.S."/>
            <person name="Kumar D."/>
            <person name="Kumar P."/>
            <person name="Balakrishnan L."/>
            <person name="Muthusamy B."/>
            <person name="Yadav A.K."/>
            <person name="Shrivastava P."/>
            <person name="Marimuthu A."/>
            <person name="Anand S."/>
            <person name="Sundaram H."/>
            <person name="Kingsbury R."/>
            <person name="Harsha H.C."/>
            <person name="Nair B."/>
            <person name="Prasad T.S."/>
            <person name="Chauhan D.S."/>
            <person name="Katoch K."/>
            <person name="Katoch V.M."/>
            <person name="Kumar P."/>
            <person name="Chaerkady R."/>
            <person name="Ramachandran S."/>
            <person name="Dash D."/>
            <person name="Pandey A."/>
        </authorList>
    </citation>
    <scope>IDENTIFICATION BY MASS SPECTROMETRY [LARGE SCALE ANALYSIS]</scope>
    <source>
        <strain>ATCC 25618 / H37Rv</strain>
    </source>
</reference>
<reference key="3">
    <citation type="journal article" date="2007" name="J. Biol. Chem.">
        <title>Structural insights into catalysis and inhibition of O-acetylserine sulfhydrylase from Mycobacterium tuberculosis. Crystal structures of the enzyme alpha-aminoacrylate intermediate and an enzyme-inhibitor complex.</title>
        <authorList>
            <person name="Schnell R."/>
            <person name="Oehlmann W."/>
            <person name="Singh M."/>
            <person name="Schneider G."/>
        </authorList>
    </citation>
    <scope>X-RAY CRYSTALLOGRAPHY (1.8 ANGSTROMS) OF NATIVE PROTEIN AND IN COMPLEX WITH THE REACTION INTERMEDIATE ALPHA-AMINOACRYLATE OR PEPTIDE INHIBITOR</scope>
    <scope>FUNCTION</scope>
    <scope>CATALYTIC ACTIVITY</scope>
    <scope>COFACTOR</scope>
    <scope>ACTIVITY REGULATION</scope>
    <scope>SUBUNIT</scope>
    <scope>REACTION MECHANISM</scope>
    <source>
        <strain>ATCC 25618 / H37Rv</strain>
    </source>
</reference>
<feature type="chain" id="PRO_0000167094" description="O-acetylserine sulfhydrylase">
    <location>
        <begin position="1"/>
        <end position="310"/>
    </location>
</feature>
<feature type="binding site" evidence="1">
    <location>
        <position position="74"/>
    </location>
    <ligand>
        <name>pyridoxal 5'-phosphate</name>
        <dbReference type="ChEBI" id="CHEBI:597326"/>
    </ligand>
</feature>
<feature type="binding site" evidence="1">
    <location>
        <begin position="178"/>
        <end position="182"/>
    </location>
    <ligand>
        <name>pyridoxal 5'-phosphate</name>
        <dbReference type="ChEBI" id="CHEBI:597326"/>
    </ligand>
</feature>
<feature type="binding site" evidence="1">
    <location>
        <position position="266"/>
    </location>
    <ligand>
        <name>pyridoxal 5'-phosphate</name>
        <dbReference type="ChEBI" id="CHEBI:597326"/>
    </ligand>
</feature>
<feature type="modified residue" description="N6-(pyridoxal phosphate)lysine" evidence="1">
    <location>
        <position position="44"/>
    </location>
</feature>
<feature type="helix" evidence="4">
    <location>
        <begin position="7"/>
        <end position="10"/>
    </location>
</feature>
<feature type="strand" evidence="4">
    <location>
        <begin position="16"/>
        <end position="18"/>
    </location>
</feature>
<feature type="strand" evidence="4">
    <location>
        <begin position="20"/>
        <end position="22"/>
    </location>
</feature>
<feature type="strand" evidence="4">
    <location>
        <begin position="28"/>
        <end position="34"/>
    </location>
</feature>
<feature type="helix" evidence="4">
    <location>
        <begin position="35"/>
        <end position="37"/>
    </location>
</feature>
<feature type="helix" evidence="4">
    <location>
        <begin position="46"/>
        <end position="57"/>
    </location>
</feature>
<feature type="strand" evidence="4">
    <location>
        <begin position="66"/>
        <end position="70"/>
    </location>
</feature>
<feature type="helix" evidence="4">
    <location>
        <begin position="74"/>
        <end position="86"/>
    </location>
</feature>
<feature type="strand" evidence="4">
    <location>
        <begin position="89"/>
        <end position="95"/>
    </location>
</feature>
<feature type="helix" evidence="4">
    <location>
        <begin position="100"/>
        <end position="108"/>
    </location>
</feature>
<feature type="strand" evidence="4">
    <location>
        <begin position="112"/>
        <end position="116"/>
    </location>
</feature>
<feature type="helix" evidence="4">
    <location>
        <begin position="118"/>
        <end position="120"/>
    </location>
</feature>
<feature type="helix" evidence="4">
    <location>
        <begin position="121"/>
        <end position="135"/>
    </location>
</feature>
<feature type="turn" evidence="4">
    <location>
        <begin position="144"/>
        <end position="146"/>
    </location>
</feature>
<feature type="helix" evidence="4">
    <location>
        <begin position="149"/>
        <end position="156"/>
    </location>
</feature>
<feature type="helix" evidence="4">
    <location>
        <begin position="158"/>
        <end position="165"/>
    </location>
</feature>
<feature type="turn" evidence="4">
    <location>
        <begin position="166"/>
        <end position="168"/>
    </location>
</feature>
<feature type="strand" evidence="4">
    <location>
        <begin position="172"/>
        <end position="176"/>
    </location>
</feature>
<feature type="strand" evidence="4">
    <location>
        <begin position="178"/>
        <end position="180"/>
    </location>
</feature>
<feature type="helix" evidence="4">
    <location>
        <begin position="181"/>
        <end position="193"/>
    </location>
</feature>
<feature type="strand" evidence="4">
    <location>
        <begin position="198"/>
        <end position="204"/>
    </location>
</feature>
<feature type="turn" evidence="4">
    <location>
        <begin position="209"/>
        <end position="212"/>
    </location>
</feature>
<feature type="helix" evidence="4">
    <location>
        <begin position="234"/>
        <end position="236"/>
    </location>
</feature>
<feature type="strand" evidence="4">
    <location>
        <begin position="239"/>
        <end position="243"/>
    </location>
</feature>
<feature type="helix" evidence="4">
    <location>
        <begin position="245"/>
        <end position="259"/>
    </location>
</feature>
<feature type="helix" evidence="4">
    <location>
        <begin position="265"/>
        <end position="278"/>
    </location>
</feature>
<feature type="helix" evidence="4">
    <location>
        <begin position="281"/>
        <end position="283"/>
    </location>
</feature>
<feature type="strand" evidence="4">
    <location>
        <begin position="287"/>
        <end position="292"/>
    </location>
</feature>
<feature type="strand" evidence="4">
    <location>
        <begin position="294"/>
        <end position="296"/>
    </location>
</feature>
<feature type="helix" evidence="4">
    <location>
        <begin position="297"/>
        <end position="299"/>
    </location>
</feature>